<sequence length="458" mass="50399">MACNSSGCESGCYDREKDNGSKIVDDAVSGGGNHESVCVKCKCNAPMTFGDGGFDDGRFCADCFRNNVFGKFRLAVTSHAMITPSDNVLVAFSGGSSSRVSLQFVHELQIKALKNYEASRDRSLPVFGVGVAFVDETAAFPALSTEMIDAIEWVRYTVSCLSPPAKDLHVVPVESIFGSDSLDARDRLLKLLDSVPDDTGKEDLLLHLKMLSLQKVAAENGYNRLVLGSCTSRIASHVLTATVKGRGYSLSADIQHVDARWKVPIVLPLRDCVRLEITRLCLLDGLKTVELACRSQCGINDLVSSFVALLQEENPSRECTIVRTAAKLTPFYFNKIPETDDSNVPMATQRRLKRFNLKYDGSMTTEAFCPICNGPLNRSDSSELDTFEEGQESDVLYAACCSSCRFQILPQDGSSLEQFSSFLPDHMISQVKHQKVDSQAYLREKIKDCLLLDDEEVV</sequence>
<proteinExistence type="evidence at transcript level"/>
<name>CTU2_ARATH</name>
<dbReference type="EMBL" id="AL022373">
    <property type="protein sequence ID" value="CAA18485.1"/>
    <property type="status" value="ALT_SEQ"/>
    <property type="molecule type" value="Genomic_DNA"/>
</dbReference>
<dbReference type="EMBL" id="AL031986">
    <property type="protein sequence ID" value="CAA21477.1"/>
    <property type="status" value="ALT_SEQ"/>
    <property type="molecule type" value="Genomic_DNA"/>
</dbReference>
<dbReference type="EMBL" id="AL161588">
    <property type="protein sequence ID" value="CAB81500.1"/>
    <property type="status" value="ALT_SEQ"/>
    <property type="molecule type" value="Genomic_DNA"/>
</dbReference>
<dbReference type="EMBL" id="CP002687">
    <property type="protein sequence ID" value="AEE86588.1"/>
    <property type="molecule type" value="Genomic_DNA"/>
</dbReference>
<dbReference type="EMBL" id="AK175937">
    <property type="protein sequence ID" value="BAD43700.1"/>
    <property type="molecule type" value="mRNA"/>
</dbReference>
<dbReference type="EMBL" id="AK220738">
    <property type="protein sequence ID" value="BAD93893.1"/>
    <property type="molecule type" value="mRNA"/>
</dbReference>
<dbReference type="EMBL" id="BT029183">
    <property type="protein sequence ID" value="ABJ17118.1"/>
    <property type="molecule type" value="mRNA"/>
</dbReference>
<dbReference type="EMBL" id="AY085266">
    <property type="protein sequence ID" value="AAM62498.1"/>
    <property type="molecule type" value="mRNA"/>
</dbReference>
<dbReference type="PIR" id="T04701">
    <property type="entry name" value="T04701"/>
</dbReference>
<dbReference type="RefSeq" id="NP_567993.1">
    <property type="nucleotide sequence ID" value="NM_119758.3"/>
</dbReference>
<dbReference type="SMR" id="O65628"/>
<dbReference type="BioGRID" id="15028">
    <property type="interactions" value="2"/>
</dbReference>
<dbReference type="FunCoup" id="O65628">
    <property type="interactions" value="4305"/>
</dbReference>
<dbReference type="STRING" id="3702.O65628"/>
<dbReference type="iPTMnet" id="O65628"/>
<dbReference type="PaxDb" id="3702-AT4G35910.1"/>
<dbReference type="ProteomicsDB" id="220457"/>
<dbReference type="EnsemblPlants" id="AT4G35910.1">
    <property type="protein sequence ID" value="AT4G35910.1"/>
    <property type="gene ID" value="AT4G35910"/>
</dbReference>
<dbReference type="GeneID" id="829746"/>
<dbReference type="Gramene" id="AT4G35910.1">
    <property type="protein sequence ID" value="AT4G35910.1"/>
    <property type="gene ID" value="AT4G35910"/>
</dbReference>
<dbReference type="KEGG" id="ath:AT4G35910"/>
<dbReference type="Araport" id="AT4G35910"/>
<dbReference type="TAIR" id="AT4G35910">
    <property type="gene designation" value="CTU2"/>
</dbReference>
<dbReference type="eggNOG" id="KOG2594">
    <property type="taxonomic scope" value="Eukaryota"/>
</dbReference>
<dbReference type="HOGENOM" id="CLU_048050_0_0_1"/>
<dbReference type="InParanoid" id="O65628"/>
<dbReference type="OMA" id="CHACRNI"/>
<dbReference type="UniPathway" id="UPA00988"/>
<dbReference type="PRO" id="PR:O65628"/>
<dbReference type="Proteomes" id="UP000006548">
    <property type="component" value="Chromosome 4"/>
</dbReference>
<dbReference type="ExpressionAtlas" id="O65628">
    <property type="expression patterns" value="baseline and differential"/>
</dbReference>
<dbReference type="GO" id="GO:0005737">
    <property type="term" value="C:cytoplasm"/>
    <property type="evidence" value="ECO:0007669"/>
    <property type="project" value="UniProtKB-SubCell"/>
</dbReference>
<dbReference type="GO" id="GO:0016779">
    <property type="term" value="F:nucleotidyltransferase activity"/>
    <property type="evidence" value="ECO:0007669"/>
    <property type="project" value="UniProtKB-UniRule"/>
</dbReference>
<dbReference type="GO" id="GO:0016783">
    <property type="term" value="F:sulfurtransferase activity"/>
    <property type="evidence" value="ECO:0000315"/>
    <property type="project" value="TAIR"/>
</dbReference>
<dbReference type="GO" id="GO:0000049">
    <property type="term" value="F:tRNA binding"/>
    <property type="evidence" value="ECO:0007669"/>
    <property type="project" value="InterPro"/>
</dbReference>
<dbReference type="GO" id="GO:0010311">
    <property type="term" value="P:lateral root formation"/>
    <property type="evidence" value="ECO:0000315"/>
    <property type="project" value="TAIR"/>
</dbReference>
<dbReference type="GO" id="GO:0032447">
    <property type="term" value="P:protein urmylation"/>
    <property type="evidence" value="ECO:0007669"/>
    <property type="project" value="UniProtKB-UniRule"/>
</dbReference>
<dbReference type="GO" id="GO:0034227">
    <property type="term" value="P:tRNA thio-modification"/>
    <property type="evidence" value="ECO:0000315"/>
    <property type="project" value="TAIR"/>
</dbReference>
<dbReference type="GO" id="GO:0002098">
    <property type="term" value="P:tRNA wobble uridine modification"/>
    <property type="evidence" value="ECO:0007669"/>
    <property type="project" value="UniProtKB-UniRule"/>
</dbReference>
<dbReference type="FunFam" id="3.40.50.620:FF:000199">
    <property type="entry name" value="Cytoplasmic tRNA 2-thiolation protein 2"/>
    <property type="match status" value="1"/>
</dbReference>
<dbReference type="Gene3D" id="3.40.50.620">
    <property type="entry name" value="HUPs"/>
    <property type="match status" value="1"/>
</dbReference>
<dbReference type="HAMAP" id="MF_03054">
    <property type="entry name" value="CTU2"/>
    <property type="match status" value="1"/>
</dbReference>
<dbReference type="InterPro" id="IPR019407">
    <property type="entry name" value="CTU2"/>
</dbReference>
<dbReference type="InterPro" id="IPR014729">
    <property type="entry name" value="Rossmann-like_a/b/a_fold"/>
</dbReference>
<dbReference type="PANTHER" id="PTHR20882">
    <property type="entry name" value="CYTOPLASMIC TRNA 2-THIOLATION PROTEIN 2"/>
    <property type="match status" value="1"/>
</dbReference>
<dbReference type="PANTHER" id="PTHR20882:SF14">
    <property type="entry name" value="CYTOPLASMIC TRNA 2-THIOLATION PROTEIN 2"/>
    <property type="match status" value="1"/>
</dbReference>
<dbReference type="Pfam" id="PF10288">
    <property type="entry name" value="CTU2"/>
    <property type="match status" value="1"/>
</dbReference>
<dbReference type="SUPFAM" id="SSF52402">
    <property type="entry name" value="Adenine nucleotide alpha hydrolases-like"/>
    <property type="match status" value="1"/>
</dbReference>
<feature type="chain" id="PRO_0000369282" description="Cytoplasmic tRNA 2-thiolation protein 2">
    <location>
        <begin position="1"/>
        <end position="458"/>
    </location>
</feature>
<feature type="sequence conflict" description="In Ref. 5; AAM62498." evidence="2" ref="5">
    <original>P</original>
    <variation>Q</variation>
    <location>
        <position position="172"/>
    </location>
</feature>
<feature type="sequence conflict" description="In Ref. 3; BAD43700/BAD93893." evidence="2" ref="3">
    <original>R</original>
    <variation>G</variation>
    <location>
        <position position="187"/>
    </location>
</feature>
<protein>
    <recommendedName>
        <fullName evidence="1">Cytoplasmic tRNA 2-thiolation protein 2</fullName>
    </recommendedName>
</protein>
<evidence type="ECO:0000255" key="1">
    <source>
        <dbReference type="HAMAP-Rule" id="MF_03054"/>
    </source>
</evidence>
<evidence type="ECO:0000305" key="2"/>
<organism>
    <name type="scientific">Arabidopsis thaliana</name>
    <name type="common">Mouse-ear cress</name>
    <dbReference type="NCBI Taxonomy" id="3702"/>
    <lineage>
        <taxon>Eukaryota</taxon>
        <taxon>Viridiplantae</taxon>
        <taxon>Streptophyta</taxon>
        <taxon>Embryophyta</taxon>
        <taxon>Tracheophyta</taxon>
        <taxon>Spermatophyta</taxon>
        <taxon>Magnoliopsida</taxon>
        <taxon>eudicotyledons</taxon>
        <taxon>Gunneridae</taxon>
        <taxon>Pentapetalae</taxon>
        <taxon>rosids</taxon>
        <taxon>malvids</taxon>
        <taxon>Brassicales</taxon>
        <taxon>Brassicaceae</taxon>
        <taxon>Camelineae</taxon>
        <taxon>Arabidopsis</taxon>
    </lineage>
</organism>
<accession>O65628</accession>
<accession>Q058N5</accession>
<accession>Q680D0</accession>
<accession>Q8LES1</accession>
<keyword id="KW-0963">Cytoplasm</keyword>
<keyword id="KW-1185">Reference proteome</keyword>
<keyword id="KW-0819">tRNA processing</keyword>
<comment type="function">
    <text evidence="1">Plays a central role in 2-thiolation of mcm(5)S(2)U at tRNA wobble positions of tRNA(Lys), tRNA(Glu) and tRNA(Gln). May act by forming a heterodimer with NCS6/CTU1 that ligates sulfur from thiocarboxylated URM1 onto the uridine of tRNAs at wobble position.</text>
</comment>
<comment type="pathway">
    <text evidence="1">tRNA modification; 5-methoxycarbonylmethyl-2-thiouridine-tRNA biosynthesis.</text>
</comment>
<comment type="subcellular location">
    <subcellularLocation>
        <location evidence="1">Cytoplasm</location>
    </subcellularLocation>
</comment>
<comment type="similarity">
    <text evidence="1">Belongs to the CTU2/NCS2 family.</text>
</comment>
<comment type="sequence caution" evidence="2">
    <conflict type="erroneous gene model prediction">
        <sequence resource="EMBL-CDS" id="CAA18485"/>
    </conflict>
</comment>
<comment type="sequence caution" evidence="2">
    <conflict type="erroneous gene model prediction">
        <sequence resource="EMBL-CDS" id="CAA21477"/>
    </conflict>
</comment>
<comment type="sequence caution" evidence="2">
    <conflict type="erroneous gene model prediction">
        <sequence resource="EMBL-CDS" id="CAB81500"/>
    </conflict>
</comment>
<gene>
    <name evidence="1" type="primary">CTU2</name>
    <name evidence="1" type="synonym">NCS2</name>
    <name type="ordered locus">At4g35910</name>
    <name type="ORF">T19K4.40</name>
</gene>
<reference key="1">
    <citation type="journal article" date="1999" name="Nature">
        <title>Sequence and analysis of chromosome 4 of the plant Arabidopsis thaliana.</title>
        <authorList>
            <person name="Mayer K.F.X."/>
            <person name="Schueller C."/>
            <person name="Wambutt R."/>
            <person name="Murphy G."/>
            <person name="Volckaert G."/>
            <person name="Pohl T."/>
            <person name="Duesterhoeft A."/>
            <person name="Stiekema W."/>
            <person name="Entian K.-D."/>
            <person name="Terryn N."/>
            <person name="Harris B."/>
            <person name="Ansorge W."/>
            <person name="Brandt P."/>
            <person name="Grivell L.A."/>
            <person name="Rieger M."/>
            <person name="Weichselgartner M."/>
            <person name="de Simone V."/>
            <person name="Obermaier B."/>
            <person name="Mache R."/>
            <person name="Mueller M."/>
            <person name="Kreis M."/>
            <person name="Delseny M."/>
            <person name="Puigdomenech P."/>
            <person name="Watson M."/>
            <person name="Schmidtheini T."/>
            <person name="Reichert B."/>
            <person name="Portetelle D."/>
            <person name="Perez-Alonso M."/>
            <person name="Boutry M."/>
            <person name="Bancroft I."/>
            <person name="Vos P."/>
            <person name="Hoheisel J."/>
            <person name="Zimmermann W."/>
            <person name="Wedler H."/>
            <person name="Ridley P."/>
            <person name="Langham S.-A."/>
            <person name="McCullagh B."/>
            <person name="Bilham L."/>
            <person name="Robben J."/>
            <person name="van der Schueren J."/>
            <person name="Grymonprez B."/>
            <person name="Chuang Y.-J."/>
            <person name="Vandenbussche F."/>
            <person name="Braeken M."/>
            <person name="Weltjens I."/>
            <person name="Voet M."/>
            <person name="Bastiaens I."/>
            <person name="Aert R."/>
            <person name="Defoor E."/>
            <person name="Weitzenegger T."/>
            <person name="Bothe G."/>
            <person name="Ramsperger U."/>
            <person name="Hilbert H."/>
            <person name="Braun M."/>
            <person name="Holzer E."/>
            <person name="Brandt A."/>
            <person name="Peters S."/>
            <person name="van Staveren M."/>
            <person name="Dirkse W."/>
            <person name="Mooijman P."/>
            <person name="Klein Lankhorst R."/>
            <person name="Rose M."/>
            <person name="Hauf J."/>
            <person name="Koetter P."/>
            <person name="Berneiser S."/>
            <person name="Hempel S."/>
            <person name="Feldpausch M."/>
            <person name="Lamberth S."/>
            <person name="Van den Daele H."/>
            <person name="De Keyser A."/>
            <person name="Buysshaert C."/>
            <person name="Gielen J."/>
            <person name="Villarroel R."/>
            <person name="De Clercq R."/>
            <person name="van Montagu M."/>
            <person name="Rogers J."/>
            <person name="Cronin A."/>
            <person name="Quail M.A."/>
            <person name="Bray-Allen S."/>
            <person name="Clark L."/>
            <person name="Doggett J."/>
            <person name="Hall S."/>
            <person name="Kay M."/>
            <person name="Lennard N."/>
            <person name="McLay K."/>
            <person name="Mayes R."/>
            <person name="Pettett A."/>
            <person name="Rajandream M.A."/>
            <person name="Lyne M."/>
            <person name="Benes V."/>
            <person name="Rechmann S."/>
            <person name="Borkova D."/>
            <person name="Bloecker H."/>
            <person name="Scharfe M."/>
            <person name="Grimm M."/>
            <person name="Loehnert T.-H."/>
            <person name="Dose S."/>
            <person name="de Haan M."/>
            <person name="Maarse A.C."/>
            <person name="Schaefer M."/>
            <person name="Mueller-Auer S."/>
            <person name="Gabel C."/>
            <person name="Fuchs M."/>
            <person name="Fartmann B."/>
            <person name="Granderath K."/>
            <person name="Dauner D."/>
            <person name="Herzl A."/>
            <person name="Neumann S."/>
            <person name="Argiriou A."/>
            <person name="Vitale D."/>
            <person name="Liguori R."/>
            <person name="Piravandi E."/>
            <person name="Massenet O."/>
            <person name="Quigley F."/>
            <person name="Clabauld G."/>
            <person name="Muendlein A."/>
            <person name="Felber R."/>
            <person name="Schnabl S."/>
            <person name="Hiller R."/>
            <person name="Schmidt W."/>
            <person name="Lecharny A."/>
            <person name="Aubourg S."/>
            <person name="Chefdor F."/>
            <person name="Cooke R."/>
            <person name="Berger C."/>
            <person name="Monfort A."/>
            <person name="Casacuberta E."/>
            <person name="Gibbons T."/>
            <person name="Weber N."/>
            <person name="Vandenbol M."/>
            <person name="Bargues M."/>
            <person name="Terol J."/>
            <person name="Torres A."/>
            <person name="Perez-Perez A."/>
            <person name="Purnelle B."/>
            <person name="Bent E."/>
            <person name="Johnson S."/>
            <person name="Tacon D."/>
            <person name="Jesse T."/>
            <person name="Heijnen L."/>
            <person name="Schwarz S."/>
            <person name="Scholler P."/>
            <person name="Heber S."/>
            <person name="Francs P."/>
            <person name="Bielke C."/>
            <person name="Frishman D."/>
            <person name="Haase D."/>
            <person name="Lemcke K."/>
            <person name="Mewes H.-W."/>
            <person name="Stocker S."/>
            <person name="Zaccaria P."/>
            <person name="Bevan M."/>
            <person name="Wilson R.K."/>
            <person name="de la Bastide M."/>
            <person name="Habermann K."/>
            <person name="Parnell L."/>
            <person name="Dedhia N."/>
            <person name="Gnoj L."/>
            <person name="Schutz K."/>
            <person name="Huang E."/>
            <person name="Spiegel L."/>
            <person name="Sekhon M."/>
            <person name="Murray J."/>
            <person name="Sheet P."/>
            <person name="Cordes M."/>
            <person name="Abu-Threideh J."/>
            <person name="Stoneking T."/>
            <person name="Kalicki J."/>
            <person name="Graves T."/>
            <person name="Harmon G."/>
            <person name="Edwards J."/>
            <person name="Latreille P."/>
            <person name="Courtney L."/>
            <person name="Cloud J."/>
            <person name="Abbott A."/>
            <person name="Scott K."/>
            <person name="Johnson D."/>
            <person name="Minx P."/>
            <person name="Bentley D."/>
            <person name="Fulton B."/>
            <person name="Miller N."/>
            <person name="Greco T."/>
            <person name="Kemp K."/>
            <person name="Kramer J."/>
            <person name="Fulton L."/>
            <person name="Mardis E."/>
            <person name="Dante M."/>
            <person name="Pepin K."/>
            <person name="Hillier L.W."/>
            <person name="Nelson J."/>
            <person name="Spieth J."/>
            <person name="Ryan E."/>
            <person name="Andrews S."/>
            <person name="Geisel C."/>
            <person name="Layman D."/>
            <person name="Du H."/>
            <person name="Ali J."/>
            <person name="Berghoff A."/>
            <person name="Jones K."/>
            <person name="Drone K."/>
            <person name="Cotton M."/>
            <person name="Joshu C."/>
            <person name="Antonoiu B."/>
            <person name="Zidanic M."/>
            <person name="Strong C."/>
            <person name="Sun H."/>
            <person name="Lamar B."/>
            <person name="Yordan C."/>
            <person name="Ma P."/>
            <person name="Zhong J."/>
            <person name="Preston R."/>
            <person name="Vil D."/>
            <person name="Shekher M."/>
            <person name="Matero A."/>
            <person name="Shah R."/>
            <person name="Swaby I.K."/>
            <person name="O'Shaughnessy A."/>
            <person name="Rodriguez M."/>
            <person name="Hoffman J."/>
            <person name="Till S."/>
            <person name="Granat S."/>
            <person name="Shohdy N."/>
            <person name="Hasegawa A."/>
            <person name="Hameed A."/>
            <person name="Lodhi M."/>
            <person name="Johnson A."/>
            <person name="Chen E."/>
            <person name="Marra M.A."/>
            <person name="Martienssen R."/>
            <person name="McCombie W.R."/>
        </authorList>
    </citation>
    <scope>NUCLEOTIDE SEQUENCE [LARGE SCALE GENOMIC DNA]</scope>
    <source>
        <strain>cv. Columbia</strain>
    </source>
</reference>
<reference key="2">
    <citation type="journal article" date="2017" name="Plant J.">
        <title>Araport11: a complete reannotation of the Arabidopsis thaliana reference genome.</title>
        <authorList>
            <person name="Cheng C.Y."/>
            <person name="Krishnakumar V."/>
            <person name="Chan A.P."/>
            <person name="Thibaud-Nissen F."/>
            <person name="Schobel S."/>
            <person name="Town C.D."/>
        </authorList>
    </citation>
    <scope>GENOME REANNOTATION</scope>
    <source>
        <strain>cv. Columbia</strain>
    </source>
</reference>
<reference key="3">
    <citation type="submission" date="2005-03" db="EMBL/GenBank/DDBJ databases">
        <title>Large-scale analysis of RIKEN Arabidopsis full-length (RAFL) cDNAs.</title>
        <authorList>
            <person name="Totoki Y."/>
            <person name="Seki M."/>
            <person name="Ishida J."/>
            <person name="Nakajima M."/>
            <person name="Enju A."/>
            <person name="Kamiya A."/>
            <person name="Narusaka M."/>
            <person name="Shin-i T."/>
            <person name="Nakagawa M."/>
            <person name="Sakamoto N."/>
            <person name="Oishi K."/>
            <person name="Kohara Y."/>
            <person name="Kobayashi M."/>
            <person name="Toyoda A."/>
            <person name="Sakaki Y."/>
            <person name="Sakurai T."/>
            <person name="Iida K."/>
            <person name="Akiyama K."/>
            <person name="Satou M."/>
            <person name="Toyoda T."/>
            <person name="Konagaya A."/>
            <person name="Carninci P."/>
            <person name="Kawai J."/>
            <person name="Hayashizaki Y."/>
            <person name="Shinozaki K."/>
        </authorList>
    </citation>
    <scope>NUCLEOTIDE SEQUENCE [LARGE SCALE MRNA]</scope>
    <source>
        <strain>cv. Columbia</strain>
    </source>
</reference>
<reference key="4">
    <citation type="submission" date="2006-10" db="EMBL/GenBank/DDBJ databases">
        <title>Arabidopsis ORF clones.</title>
        <authorList>
            <person name="Bautista V.R."/>
            <person name="Kim C.J."/>
            <person name="Chen H."/>
            <person name="Quinitio C."/>
            <person name="Ecker J.R."/>
        </authorList>
    </citation>
    <scope>NUCLEOTIDE SEQUENCE [LARGE SCALE MRNA]</scope>
    <source>
        <strain>cv. Columbia</strain>
    </source>
</reference>
<reference key="5">
    <citation type="submission" date="2002-03" db="EMBL/GenBank/DDBJ databases">
        <title>Full-length cDNA from Arabidopsis thaliana.</title>
        <authorList>
            <person name="Brover V.V."/>
            <person name="Troukhan M.E."/>
            <person name="Alexandrov N.A."/>
            <person name="Lu Y.-P."/>
            <person name="Flavell R.B."/>
            <person name="Feldmann K.A."/>
        </authorList>
    </citation>
    <scope>NUCLEOTIDE SEQUENCE [LARGE SCALE MRNA]</scope>
</reference>